<name>AP4AT_MOUSE</name>
<protein>
    <recommendedName>
        <fullName evidence="3">AP-4 complex accessory subunit Tepsin</fullName>
    </recommendedName>
    <alternativeName>
        <fullName evidence="4">ENTH domain-containing protein 2</fullName>
    </alternativeName>
</protein>
<gene>
    <name evidence="4" type="primary">Tepsin</name>
    <name evidence="4" type="synonym">Enthd2</name>
</gene>
<feature type="chain" id="PRO_0000286679" description="AP-4 complex accessory subunit Tepsin">
    <location>
        <begin position="1"/>
        <end position="573"/>
    </location>
</feature>
<feature type="domain" description="ENTH">
    <location>
        <begin position="8"/>
        <end position="141"/>
    </location>
</feature>
<feature type="region of interest" description="Disordered" evidence="2">
    <location>
        <begin position="136"/>
        <end position="155"/>
    </location>
</feature>
<feature type="region of interest" description="Disordered" evidence="2">
    <location>
        <begin position="194"/>
        <end position="311"/>
    </location>
</feature>
<feature type="region of interest" description="Disordered" evidence="2">
    <location>
        <begin position="497"/>
        <end position="526"/>
    </location>
</feature>
<feature type="region of interest" description="Interaction with AP4B1" evidence="1">
    <location>
        <begin position="526"/>
        <end position="536"/>
    </location>
</feature>
<feature type="region of interest" description="Interaction with AP4E1" evidence="1">
    <location>
        <begin position="563"/>
        <end position="573"/>
    </location>
</feature>
<feature type="compositionally biased region" description="Pro residues" evidence="2">
    <location>
        <begin position="137"/>
        <end position="150"/>
    </location>
</feature>
<feature type="compositionally biased region" description="Polar residues" evidence="2">
    <location>
        <begin position="217"/>
        <end position="229"/>
    </location>
</feature>
<feature type="compositionally biased region" description="Low complexity" evidence="2">
    <location>
        <begin position="260"/>
        <end position="293"/>
    </location>
</feature>
<feature type="compositionally biased region" description="Basic and acidic residues" evidence="2">
    <location>
        <begin position="294"/>
        <end position="303"/>
    </location>
</feature>
<feature type="modified residue" description="Phosphoserine" evidence="1">
    <location>
        <position position="400"/>
    </location>
</feature>
<feature type="sequence conflict" description="In Ref. 1; BAC25578." evidence="3" ref="1">
    <original>L</original>
    <variation>V</variation>
    <location>
        <position position="73"/>
    </location>
</feature>
<feature type="sequence conflict" description="In Ref. 1; BAC25578." evidence="3" ref="1">
    <original>P</original>
    <variation>Q</variation>
    <location>
        <position position="324"/>
    </location>
</feature>
<feature type="sequence conflict" description="In Ref. 1; BAC25578." evidence="3" ref="1">
    <original>S</original>
    <variation>R</variation>
    <location>
        <position position="462"/>
    </location>
</feature>
<feature type="sequence conflict" description="In Ref. 1; BAC25578." evidence="3" ref="1">
    <original>SAL</original>
    <variation>CAV</variation>
    <location>
        <begin position="483"/>
        <end position="485"/>
    </location>
</feature>
<feature type="sequence conflict" description="In Ref. 1; BAC25578." evidence="3" ref="1">
    <original>A</original>
    <variation>G</variation>
    <location>
        <position position="537"/>
    </location>
</feature>
<feature type="sequence conflict" description="In Ref. 1; BAC25578." evidence="3" ref="1">
    <original>A</original>
    <variation>G</variation>
    <location>
        <position position="560"/>
    </location>
</feature>
<evidence type="ECO:0000250" key="1">
    <source>
        <dbReference type="UniProtKB" id="Q96N21"/>
    </source>
</evidence>
<evidence type="ECO:0000256" key="2">
    <source>
        <dbReference type="SAM" id="MobiDB-lite"/>
    </source>
</evidence>
<evidence type="ECO:0000305" key="3"/>
<evidence type="ECO:0000312" key="4">
    <source>
        <dbReference type="MGI" id="MGI:1926027"/>
    </source>
</evidence>
<dbReference type="EMBL" id="AK019105">
    <property type="protein sequence ID" value="BAC25578.1"/>
    <property type="status" value="ALT_FRAME"/>
    <property type="molecule type" value="mRNA"/>
</dbReference>
<dbReference type="EMBL" id="AK154660">
    <property type="protein sequence ID" value="BAE32749.1"/>
    <property type="molecule type" value="mRNA"/>
</dbReference>
<dbReference type="EMBL" id="AL807824">
    <property type="status" value="NOT_ANNOTATED_CDS"/>
    <property type="molecule type" value="Genomic_DNA"/>
</dbReference>
<dbReference type="CCDS" id="CCDS36387.1"/>
<dbReference type="RefSeq" id="NP_898960.2">
    <property type="nucleotide sequence ID" value="NM_183137.2"/>
</dbReference>
<dbReference type="SMR" id="Q3U3N6"/>
<dbReference type="FunCoup" id="Q3U3N6">
    <property type="interactions" value="1797"/>
</dbReference>
<dbReference type="STRING" id="10090.ENSMUSP00000091428"/>
<dbReference type="GlyGen" id="Q3U3N6">
    <property type="glycosylation" value="1 site"/>
</dbReference>
<dbReference type="iPTMnet" id="Q3U3N6"/>
<dbReference type="PhosphoSitePlus" id="Q3U3N6"/>
<dbReference type="jPOST" id="Q3U3N6"/>
<dbReference type="PaxDb" id="10090-ENSMUSP00000091428"/>
<dbReference type="ProteomicsDB" id="281897"/>
<dbReference type="Pumba" id="Q3U3N6"/>
<dbReference type="Antibodypedia" id="53274">
    <property type="antibodies" value="15 antibodies from 6 providers"/>
</dbReference>
<dbReference type="Ensembl" id="ENSMUST00000093901.12">
    <property type="protein sequence ID" value="ENSMUSP00000091428.6"/>
    <property type="gene ID" value="ENSMUSG00000025377.15"/>
</dbReference>
<dbReference type="GeneID" id="78777"/>
<dbReference type="KEGG" id="mmu:78777"/>
<dbReference type="UCSC" id="uc007mrq.1">
    <property type="organism name" value="mouse"/>
</dbReference>
<dbReference type="AGR" id="MGI:1926027"/>
<dbReference type="CTD" id="146705"/>
<dbReference type="MGI" id="MGI:1926027">
    <property type="gene designation" value="Tepsin"/>
</dbReference>
<dbReference type="VEuPathDB" id="HostDB:ENSMUSG00000025377"/>
<dbReference type="eggNOG" id="ENOG502QV38">
    <property type="taxonomic scope" value="Eukaryota"/>
</dbReference>
<dbReference type="GeneTree" id="ENSGT00390000015076"/>
<dbReference type="InParanoid" id="Q3U3N6"/>
<dbReference type="OMA" id="KASQRCP"/>
<dbReference type="OrthoDB" id="118154at2759"/>
<dbReference type="PhylomeDB" id="Q3U3N6"/>
<dbReference type="TreeFam" id="TF331354"/>
<dbReference type="BioGRID-ORCS" id="78777">
    <property type="hits" value="1 hit in 76 CRISPR screens"/>
</dbReference>
<dbReference type="ChiTaRS" id="Enthd2">
    <property type="organism name" value="mouse"/>
</dbReference>
<dbReference type="PRO" id="PR:Q3U3N6"/>
<dbReference type="Proteomes" id="UP000000589">
    <property type="component" value="Chromosome 11"/>
</dbReference>
<dbReference type="RNAct" id="Q3U3N6">
    <property type="molecule type" value="protein"/>
</dbReference>
<dbReference type="Bgee" id="ENSMUSG00000025377">
    <property type="expression patterns" value="Expressed in granulocyte and 94 other cell types or tissues"/>
</dbReference>
<dbReference type="ExpressionAtlas" id="Q3U3N6">
    <property type="expression patterns" value="baseline and differential"/>
</dbReference>
<dbReference type="GO" id="GO:0030662">
    <property type="term" value="C:coated vesicle membrane"/>
    <property type="evidence" value="ECO:0000250"/>
    <property type="project" value="UniProtKB"/>
</dbReference>
<dbReference type="GO" id="GO:0005829">
    <property type="term" value="C:cytosol"/>
    <property type="evidence" value="ECO:0007669"/>
    <property type="project" value="UniProtKB-SubCell"/>
</dbReference>
<dbReference type="GO" id="GO:0005794">
    <property type="term" value="C:Golgi apparatus"/>
    <property type="evidence" value="ECO:0007669"/>
    <property type="project" value="UniProtKB-SubCell"/>
</dbReference>
<dbReference type="GO" id="GO:0044877">
    <property type="term" value="F:protein-containing complex binding"/>
    <property type="evidence" value="ECO:0000250"/>
    <property type="project" value="UniProtKB"/>
</dbReference>
<dbReference type="CDD" id="cd03572">
    <property type="entry name" value="ENTH_like_Tepsin"/>
    <property type="match status" value="1"/>
</dbReference>
<dbReference type="FunFam" id="1.25.40.90:FF:000029">
    <property type="entry name" value="AP-4 complex accessory subunit Tepsin"/>
    <property type="match status" value="1"/>
</dbReference>
<dbReference type="Gene3D" id="1.25.40.90">
    <property type="match status" value="1"/>
</dbReference>
<dbReference type="InterPro" id="IPR013809">
    <property type="entry name" value="ENTH"/>
</dbReference>
<dbReference type="InterPro" id="IPR035802">
    <property type="entry name" value="ENTH/VHS_tepsin"/>
</dbReference>
<dbReference type="InterPro" id="IPR008942">
    <property type="entry name" value="ENTH_VHS"/>
</dbReference>
<dbReference type="InterPro" id="IPR039273">
    <property type="entry name" value="TEPSIN"/>
</dbReference>
<dbReference type="PANTHER" id="PTHR21514">
    <property type="entry name" value="AP-4 COMPLEX ACCESSORY SUBUNIT TEPSIN"/>
    <property type="match status" value="1"/>
</dbReference>
<dbReference type="PANTHER" id="PTHR21514:SF0">
    <property type="entry name" value="AP-4 COMPLEX ACCESSORY SUBUNIT TEPSIN"/>
    <property type="match status" value="1"/>
</dbReference>
<dbReference type="Pfam" id="PF01417">
    <property type="entry name" value="ENTH"/>
    <property type="match status" value="1"/>
</dbReference>
<dbReference type="SUPFAM" id="SSF48464">
    <property type="entry name" value="ENTH/VHS domain"/>
    <property type="match status" value="1"/>
</dbReference>
<sequence length="573" mass="60761">MAAVPPLRDRLSFLHRLPILLKGTSDDSIPCPGYLFEEIAKISHESLGSSQCLLEYLLNRLDSSSGHVKLKVLKILLYLCGHGSSSFLLILRRNSALIQEATAFSGPPDPLHGNSLYQKVRAAAQDLGSTLFSDAVPQPPSQPPQIPPPAGMGAQARPLSALQGFGYTKESSRTGSAGETFLSTIQRAAEVVANAVRPGPDNPCTKGPLPYGDSYQPAVTPSASHTHPNPGNLLPGAILGARAVRHQPGQAGGGWDELDSSPSSQNSSCTSNLSRASDSGSRSGSDSHSGTSREPGDLAERAEATPPNDCQQELNLVRTVTQGPRVFLSREETQHFIKECGLLNCEAVLELLLRQLVGTSECEQMRALCAIASFGSADLLPQEHVLLLCRQQLQELGAGSPGPVTNKATKILRHFEASCGQQLPTLRLCAQPNSAAAPVGPADLLTSPVPAPGSQVFLQPLSSATVVPRSPVLFPSPNTLPPSALEEPSEVRTQLVCSSEQGTESEQRLENTDTPEDSSSPLPWSPNSLFAGMELVACPRLPCHSSQDLQTDLQKVTTEAPVSEPSAFAFLNM</sequence>
<proteinExistence type="evidence at transcript level"/>
<comment type="function">
    <text evidence="1">Associates with the adapter-like complex 4 (AP-4) and may therefore play a role in vesicular trafficking of proteins at the trans-Golgi network.</text>
</comment>
<comment type="subunit">
    <text evidence="1">Interacts with AP4B1 and AP4E1; the interaction is direct and mediates the association of TEPSIN with the adapter-like complex 4 (AP-4), a heterotetramer composed of AP4B1, AP4E1, AP4M1 and AP4S1.</text>
</comment>
<comment type="subcellular location">
    <subcellularLocation>
        <location evidence="1">Golgi apparatus</location>
        <location evidence="1">trans-Golgi network membrane</location>
        <topology evidence="1">Peripheral membrane protein</topology>
    </subcellularLocation>
    <subcellularLocation>
        <location evidence="1">Cytoplasmic vesicle</location>
    </subcellularLocation>
    <subcellularLocation>
        <location evidence="1">Cytoplasm</location>
        <location evidence="1">Cytosol</location>
    </subcellularLocation>
    <text evidence="1">Extensively colocalizes with AP-4 which mediates the recruitment of TEPSIN to the trans-Golgi network.</text>
</comment>
<comment type="sequence caution" evidence="3">
    <conflict type="frameshift">
        <sequence resource="EMBL-CDS" id="BAC25578"/>
    </conflict>
</comment>
<organism>
    <name type="scientific">Mus musculus</name>
    <name type="common">Mouse</name>
    <dbReference type="NCBI Taxonomy" id="10090"/>
    <lineage>
        <taxon>Eukaryota</taxon>
        <taxon>Metazoa</taxon>
        <taxon>Chordata</taxon>
        <taxon>Craniata</taxon>
        <taxon>Vertebrata</taxon>
        <taxon>Euteleostomi</taxon>
        <taxon>Mammalia</taxon>
        <taxon>Eutheria</taxon>
        <taxon>Euarchontoglires</taxon>
        <taxon>Glires</taxon>
        <taxon>Rodentia</taxon>
        <taxon>Myomorpha</taxon>
        <taxon>Muroidea</taxon>
        <taxon>Muridae</taxon>
        <taxon>Murinae</taxon>
        <taxon>Mus</taxon>
        <taxon>Mus</taxon>
    </lineage>
</organism>
<reference key="1">
    <citation type="journal article" date="2005" name="Science">
        <title>The transcriptional landscape of the mammalian genome.</title>
        <authorList>
            <person name="Carninci P."/>
            <person name="Kasukawa T."/>
            <person name="Katayama S."/>
            <person name="Gough J."/>
            <person name="Frith M.C."/>
            <person name="Maeda N."/>
            <person name="Oyama R."/>
            <person name="Ravasi T."/>
            <person name="Lenhard B."/>
            <person name="Wells C."/>
            <person name="Kodzius R."/>
            <person name="Shimokawa K."/>
            <person name="Bajic V.B."/>
            <person name="Brenner S.E."/>
            <person name="Batalov S."/>
            <person name="Forrest A.R."/>
            <person name="Zavolan M."/>
            <person name="Davis M.J."/>
            <person name="Wilming L.G."/>
            <person name="Aidinis V."/>
            <person name="Allen J.E."/>
            <person name="Ambesi-Impiombato A."/>
            <person name="Apweiler R."/>
            <person name="Aturaliya R.N."/>
            <person name="Bailey T.L."/>
            <person name="Bansal M."/>
            <person name="Baxter L."/>
            <person name="Beisel K.W."/>
            <person name="Bersano T."/>
            <person name="Bono H."/>
            <person name="Chalk A.M."/>
            <person name="Chiu K.P."/>
            <person name="Choudhary V."/>
            <person name="Christoffels A."/>
            <person name="Clutterbuck D.R."/>
            <person name="Crowe M.L."/>
            <person name="Dalla E."/>
            <person name="Dalrymple B.P."/>
            <person name="de Bono B."/>
            <person name="Della Gatta G."/>
            <person name="di Bernardo D."/>
            <person name="Down T."/>
            <person name="Engstrom P."/>
            <person name="Fagiolini M."/>
            <person name="Faulkner G."/>
            <person name="Fletcher C.F."/>
            <person name="Fukushima T."/>
            <person name="Furuno M."/>
            <person name="Futaki S."/>
            <person name="Gariboldi M."/>
            <person name="Georgii-Hemming P."/>
            <person name="Gingeras T.R."/>
            <person name="Gojobori T."/>
            <person name="Green R.E."/>
            <person name="Gustincich S."/>
            <person name="Harbers M."/>
            <person name="Hayashi Y."/>
            <person name="Hensch T.K."/>
            <person name="Hirokawa N."/>
            <person name="Hill D."/>
            <person name="Huminiecki L."/>
            <person name="Iacono M."/>
            <person name="Ikeo K."/>
            <person name="Iwama A."/>
            <person name="Ishikawa T."/>
            <person name="Jakt M."/>
            <person name="Kanapin A."/>
            <person name="Katoh M."/>
            <person name="Kawasawa Y."/>
            <person name="Kelso J."/>
            <person name="Kitamura H."/>
            <person name="Kitano H."/>
            <person name="Kollias G."/>
            <person name="Krishnan S.P."/>
            <person name="Kruger A."/>
            <person name="Kummerfeld S.K."/>
            <person name="Kurochkin I.V."/>
            <person name="Lareau L.F."/>
            <person name="Lazarevic D."/>
            <person name="Lipovich L."/>
            <person name="Liu J."/>
            <person name="Liuni S."/>
            <person name="McWilliam S."/>
            <person name="Madan Babu M."/>
            <person name="Madera M."/>
            <person name="Marchionni L."/>
            <person name="Matsuda H."/>
            <person name="Matsuzawa S."/>
            <person name="Miki H."/>
            <person name="Mignone F."/>
            <person name="Miyake S."/>
            <person name="Morris K."/>
            <person name="Mottagui-Tabar S."/>
            <person name="Mulder N."/>
            <person name="Nakano N."/>
            <person name="Nakauchi H."/>
            <person name="Ng P."/>
            <person name="Nilsson R."/>
            <person name="Nishiguchi S."/>
            <person name="Nishikawa S."/>
            <person name="Nori F."/>
            <person name="Ohara O."/>
            <person name="Okazaki Y."/>
            <person name="Orlando V."/>
            <person name="Pang K.C."/>
            <person name="Pavan W.J."/>
            <person name="Pavesi G."/>
            <person name="Pesole G."/>
            <person name="Petrovsky N."/>
            <person name="Piazza S."/>
            <person name="Reed J."/>
            <person name="Reid J.F."/>
            <person name="Ring B.Z."/>
            <person name="Ringwald M."/>
            <person name="Rost B."/>
            <person name="Ruan Y."/>
            <person name="Salzberg S.L."/>
            <person name="Sandelin A."/>
            <person name="Schneider C."/>
            <person name="Schoenbach C."/>
            <person name="Sekiguchi K."/>
            <person name="Semple C.A."/>
            <person name="Seno S."/>
            <person name="Sessa L."/>
            <person name="Sheng Y."/>
            <person name="Shibata Y."/>
            <person name="Shimada H."/>
            <person name="Shimada K."/>
            <person name="Silva D."/>
            <person name="Sinclair B."/>
            <person name="Sperling S."/>
            <person name="Stupka E."/>
            <person name="Sugiura K."/>
            <person name="Sultana R."/>
            <person name="Takenaka Y."/>
            <person name="Taki K."/>
            <person name="Tammoja K."/>
            <person name="Tan S.L."/>
            <person name="Tang S."/>
            <person name="Taylor M.S."/>
            <person name="Tegner J."/>
            <person name="Teichmann S.A."/>
            <person name="Ueda H.R."/>
            <person name="van Nimwegen E."/>
            <person name="Verardo R."/>
            <person name="Wei C.L."/>
            <person name="Yagi K."/>
            <person name="Yamanishi H."/>
            <person name="Zabarovsky E."/>
            <person name="Zhu S."/>
            <person name="Zimmer A."/>
            <person name="Hide W."/>
            <person name="Bult C."/>
            <person name="Grimmond S.M."/>
            <person name="Teasdale R.D."/>
            <person name="Liu E.T."/>
            <person name="Brusic V."/>
            <person name="Quackenbush J."/>
            <person name="Wahlestedt C."/>
            <person name="Mattick J.S."/>
            <person name="Hume D.A."/>
            <person name="Kai C."/>
            <person name="Sasaki D."/>
            <person name="Tomaru Y."/>
            <person name="Fukuda S."/>
            <person name="Kanamori-Katayama M."/>
            <person name="Suzuki M."/>
            <person name="Aoki J."/>
            <person name="Arakawa T."/>
            <person name="Iida J."/>
            <person name="Imamura K."/>
            <person name="Itoh M."/>
            <person name="Kato T."/>
            <person name="Kawaji H."/>
            <person name="Kawagashira N."/>
            <person name="Kawashima T."/>
            <person name="Kojima M."/>
            <person name="Kondo S."/>
            <person name="Konno H."/>
            <person name="Nakano K."/>
            <person name="Ninomiya N."/>
            <person name="Nishio T."/>
            <person name="Okada M."/>
            <person name="Plessy C."/>
            <person name="Shibata K."/>
            <person name="Shiraki T."/>
            <person name="Suzuki S."/>
            <person name="Tagami M."/>
            <person name="Waki K."/>
            <person name="Watahiki A."/>
            <person name="Okamura-Oho Y."/>
            <person name="Suzuki H."/>
            <person name="Kawai J."/>
            <person name="Hayashizaki Y."/>
        </authorList>
    </citation>
    <scope>NUCLEOTIDE SEQUENCE [LARGE SCALE MRNA]</scope>
    <source>
        <strain>C57BL/6J</strain>
        <strain>NOD</strain>
        <tissue>Dendritic cell</tissue>
        <tissue>Embryonic stem cell</tissue>
    </source>
</reference>
<reference key="2">
    <citation type="journal article" date="2009" name="PLoS Biol.">
        <title>Lineage-specific biology revealed by a finished genome assembly of the mouse.</title>
        <authorList>
            <person name="Church D.M."/>
            <person name="Goodstadt L."/>
            <person name="Hillier L.W."/>
            <person name="Zody M.C."/>
            <person name="Goldstein S."/>
            <person name="She X."/>
            <person name="Bult C.J."/>
            <person name="Agarwala R."/>
            <person name="Cherry J.L."/>
            <person name="DiCuccio M."/>
            <person name="Hlavina W."/>
            <person name="Kapustin Y."/>
            <person name="Meric P."/>
            <person name="Maglott D."/>
            <person name="Birtle Z."/>
            <person name="Marques A.C."/>
            <person name="Graves T."/>
            <person name="Zhou S."/>
            <person name="Teague B."/>
            <person name="Potamousis K."/>
            <person name="Churas C."/>
            <person name="Place M."/>
            <person name="Herschleb J."/>
            <person name="Runnheim R."/>
            <person name="Forrest D."/>
            <person name="Amos-Landgraf J."/>
            <person name="Schwartz D.C."/>
            <person name="Cheng Z."/>
            <person name="Lindblad-Toh K."/>
            <person name="Eichler E.E."/>
            <person name="Ponting C.P."/>
        </authorList>
    </citation>
    <scope>NUCLEOTIDE SEQUENCE [LARGE SCALE GENOMIC DNA]</scope>
    <source>
        <strain>C57BL/6J</strain>
    </source>
</reference>
<accession>Q3U3N6</accession>
<accession>Q8C1H2</accession>
<keyword id="KW-0963">Cytoplasm</keyword>
<keyword id="KW-0968">Cytoplasmic vesicle</keyword>
<keyword id="KW-0333">Golgi apparatus</keyword>
<keyword id="KW-0472">Membrane</keyword>
<keyword id="KW-0597">Phosphoprotein</keyword>
<keyword id="KW-1185">Reference proteome</keyword>